<proteinExistence type="evidence at transcript level"/>
<reference key="1">
    <citation type="journal article" date="2004" name="Genome Res.">
        <title>The status, quality, and expansion of the NIH full-length cDNA project: the Mammalian Gene Collection (MGC).</title>
        <authorList>
            <consortium name="The MGC Project Team"/>
        </authorList>
    </citation>
    <scope>NUCLEOTIDE SEQUENCE [LARGE SCALE MRNA]</scope>
    <source>
        <strain>C57BL/6J</strain>
        <tissue>Mammary tumor</tissue>
    </source>
</reference>
<accession>Q8CFL8</accession>
<sequence>MELGSCFKTYEDFKECFSAYKKETRCSFIVRDCISVRFHNLNNGTSFREDILYVQVKFVCIRTQSNRKKTRKVDRCPAYLLLQYNETLDRLFISELNTQHIHADSNASGGIPASKPQAICLHKLPPVQLSIRKDLDTAEKPSVEPSFCLDKIHKPSNPEQEGISPSDMAKIAKVMKNFLTVDEGSMASFSVGTSQDLDRLSFQSSKMSDLFARFPETLLLHRVENSQGHILYAFLVENKERESRVVHFAVLKAETAPSVAKMLNIFTEFNSDWPKVKMVFVDPSFPHRAILQEIFPSARTLLSIYHTTRLLEKKLHQSSVNASFKRLMKEALREAVFVSSDASLKNLCEMSQVLLDEELFSFLQAHWFSCELLWYIHVRKGLHACNTYMDSLDIVTSKVSSLFREQRSLLDCILHFVDYIDFFNTKGLKSLPTNAPKLRRTRLPSTPPRPKKPFRICGGGDTRLPVEEVEETKADSAQSQLPQPQDQSSKAGMLDILHQSGSELAYKLCHNEWEVVQNSTHLVDEAGSSVAVQLLENSHQVSKDGCSCSCSFQQCYHLPCRHILALLHTSQQPVGEAMVCCRWQKKYQHLLDPNGELQDRGIIPNTDQPEKQGQNHMIRDLSRELANLLMQTEGPELEERCSTLRKIVDIWADPYQLPESSQQPVDFRDVGCLPFLWGKLEEADSPPLAEAMVHD</sequence>
<gene>
    <name type="primary">Zswim3</name>
</gene>
<dbReference type="EMBL" id="BC023287">
    <property type="protein sequence ID" value="AAH23287.1"/>
    <property type="molecule type" value="mRNA"/>
</dbReference>
<dbReference type="CCDS" id="CCDS17058.1"/>
<dbReference type="RefSeq" id="NP_848462.1">
    <property type="nucleotide sequence ID" value="NM_178375.2"/>
</dbReference>
<dbReference type="SMR" id="Q8CFL8"/>
<dbReference type="FunCoup" id="Q8CFL8">
    <property type="interactions" value="39"/>
</dbReference>
<dbReference type="STRING" id="10090.ENSMUSP00000050970"/>
<dbReference type="iPTMnet" id="Q8CFL8"/>
<dbReference type="PhosphoSitePlus" id="Q8CFL8"/>
<dbReference type="PaxDb" id="10090-ENSMUSP00000050970"/>
<dbReference type="ProteomicsDB" id="275248"/>
<dbReference type="Antibodypedia" id="43809">
    <property type="antibodies" value="61 antibodies from 13 providers"/>
</dbReference>
<dbReference type="DNASU" id="67538"/>
<dbReference type="Ensembl" id="ENSMUST00000052107.5">
    <property type="protein sequence ID" value="ENSMUSP00000050970.4"/>
    <property type="gene ID" value="ENSMUSG00000045822.5"/>
</dbReference>
<dbReference type="GeneID" id="67538"/>
<dbReference type="KEGG" id="mmu:67538"/>
<dbReference type="UCSC" id="uc008nwh.1">
    <property type="organism name" value="mouse"/>
</dbReference>
<dbReference type="AGR" id="MGI:1914788"/>
<dbReference type="CTD" id="140831"/>
<dbReference type="MGI" id="MGI:1914788">
    <property type="gene designation" value="Zswim3"/>
</dbReference>
<dbReference type="VEuPathDB" id="HostDB:ENSMUSG00000045822"/>
<dbReference type="eggNOG" id="ENOG502QVJ3">
    <property type="taxonomic scope" value="Eukaryota"/>
</dbReference>
<dbReference type="GeneTree" id="ENSGT00390000017273"/>
<dbReference type="HOGENOM" id="CLU_398444_0_0_1"/>
<dbReference type="InParanoid" id="Q8CFL8"/>
<dbReference type="OMA" id="LNTQHVH"/>
<dbReference type="OrthoDB" id="124789at2759"/>
<dbReference type="PhylomeDB" id="Q8CFL8"/>
<dbReference type="TreeFam" id="TF335703"/>
<dbReference type="BioGRID-ORCS" id="67538">
    <property type="hits" value="2 hits in 77 CRISPR screens"/>
</dbReference>
<dbReference type="ChiTaRS" id="Zswim3">
    <property type="organism name" value="mouse"/>
</dbReference>
<dbReference type="PRO" id="PR:Q8CFL8"/>
<dbReference type="Proteomes" id="UP000000589">
    <property type="component" value="Chromosome 2"/>
</dbReference>
<dbReference type="RNAct" id="Q8CFL8">
    <property type="molecule type" value="protein"/>
</dbReference>
<dbReference type="Bgee" id="ENSMUSG00000045822">
    <property type="expression patterns" value="Expressed in secondary oocyte and 139 other cell types or tissues"/>
</dbReference>
<dbReference type="GO" id="GO:0008270">
    <property type="term" value="F:zinc ion binding"/>
    <property type="evidence" value="ECO:0007669"/>
    <property type="project" value="UniProtKB-KW"/>
</dbReference>
<dbReference type="InterPro" id="IPR052579">
    <property type="entry name" value="Zinc_finger_SWIM"/>
</dbReference>
<dbReference type="InterPro" id="IPR007527">
    <property type="entry name" value="Znf_SWIM"/>
</dbReference>
<dbReference type="InterPro" id="IPR048326">
    <property type="entry name" value="ZSWIM1-3_helical"/>
</dbReference>
<dbReference type="InterPro" id="IPR048324">
    <property type="entry name" value="ZSWIM1-3_RNaseH-like"/>
</dbReference>
<dbReference type="InterPro" id="IPR045563">
    <property type="entry name" value="ZSWIM1/3_C"/>
</dbReference>
<dbReference type="InterPro" id="IPR048325">
    <property type="entry name" value="ZSWIM3_N"/>
</dbReference>
<dbReference type="PANTHER" id="PTHR31569">
    <property type="entry name" value="SWIM-TYPE DOMAIN-CONTAINING PROTEIN"/>
    <property type="match status" value="1"/>
</dbReference>
<dbReference type="PANTHER" id="PTHR31569:SF3">
    <property type="entry name" value="ZINC FINGER SWIM DOMAIN-CONTAINING PROTEIN 3"/>
    <property type="match status" value="1"/>
</dbReference>
<dbReference type="Pfam" id="PF04434">
    <property type="entry name" value="SWIM"/>
    <property type="match status" value="1"/>
</dbReference>
<dbReference type="Pfam" id="PF19286">
    <property type="entry name" value="ZSWIM1-3_C"/>
    <property type="match status" value="1"/>
</dbReference>
<dbReference type="Pfam" id="PF21600">
    <property type="entry name" value="ZSWIM1-3_helical"/>
    <property type="match status" value="1"/>
</dbReference>
<dbReference type="Pfam" id="PF21056">
    <property type="entry name" value="ZSWIM1-3_RNaseH-like"/>
    <property type="match status" value="1"/>
</dbReference>
<dbReference type="Pfam" id="PF21599">
    <property type="entry name" value="ZSWIM3_N"/>
    <property type="match status" value="1"/>
</dbReference>
<dbReference type="PROSITE" id="PS50966">
    <property type="entry name" value="ZF_SWIM"/>
    <property type="match status" value="1"/>
</dbReference>
<name>ZSWM3_MOUSE</name>
<protein>
    <recommendedName>
        <fullName>Zinc finger SWIM domain-containing protein 3</fullName>
    </recommendedName>
</protein>
<organism>
    <name type="scientific">Mus musculus</name>
    <name type="common">Mouse</name>
    <dbReference type="NCBI Taxonomy" id="10090"/>
    <lineage>
        <taxon>Eukaryota</taxon>
        <taxon>Metazoa</taxon>
        <taxon>Chordata</taxon>
        <taxon>Craniata</taxon>
        <taxon>Vertebrata</taxon>
        <taxon>Euteleostomi</taxon>
        <taxon>Mammalia</taxon>
        <taxon>Eutheria</taxon>
        <taxon>Euarchontoglires</taxon>
        <taxon>Glires</taxon>
        <taxon>Rodentia</taxon>
        <taxon>Myomorpha</taxon>
        <taxon>Muroidea</taxon>
        <taxon>Muridae</taxon>
        <taxon>Murinae</taxon>
        <taxon>Mus</taxon>
        <taxon>Mus</taxon>
    </lineage>
</organism>
<feature type="chain" id="PRO_0000223100" description="Zinc finger SWIM domain-containing protein 3">
    <location>
        <begin position="1"/>
        <end position="695"/>
    </location>
</feature>
<feature type="zinc finger region" description="SWIM-type" evidence="1">
    <location>
        <begin position="530"/>
        <end position="571"/>
    </location>
</feature>
<feature type="region of interest" description="Disordered" evidence="2">
    <location>
        <begin position="434"/>
        <end position="490"/>
    </location>
</feature>
<feature type="compositionally biased region" description="Low complexity" evidence="2">
    <location>
        <begin position="475"/>
        <end position="489"/>
    </location>
</feature>
<evidence type="ECO:0000255" key="1">
    <source>
        <dbReference type="PROSITE-ProRule" id="PRU00325"/>
    </source>
</evidence>
<evidence type="ECO:0000256" key="2">
    <source>
        <dbReference type="SAM" id="MobiDB-lite"/>
    </source>
</evidence>
<keyword id="KW-0479">Metal-binding</keyword>
<keyword id="KW-1185">Reference proteome</keyword>
<keyword id="KW-0862">Zinc</keyword>
<keyword id="KW-0863">Zinc-finger</keyword>